<protein>
    <recommendedName>
        <fullName evidence="1">Large ribosomal subunit protein bL36</fullName>
    </recommendedName>
    <alternativeName>
        <fullName evidence="2">50S ribosomal protein L36</fullName>
    </alternativeName>
</protein>
<reference key="1">
    <citation type="journal article" date="2002" name="Mol. Microbiol.">
        <title>Genome sequence of Streptococcus agalactiae, a pathogen causing invasive neonatal disease.</title>
        <authorList>
            <person name="Glaser P."/>
            <person name="Rusniok C."/>
            <person name="Buchrieser C."/>
            <person name="Chevalier F."/>
            <person name="Frangeul L."/>
            <person name="Msadek T."/>
            <person name="Zouine M."/>
            <person name="Couve E."/>
            <person name="Lalioui L."/>
            <person name="Poyart C."/>
            <person name="Trieu-Cuot P."/>
            <person name="Kunst F."/>
        </authorList>
    </citation>
    <scope>NUCLEOTIDE SEQUENCE [LARGE SCALE GENOMIC DNA]</scope>
    <source>
        <strain>NEM316</strain>
    </source>
</reference>
<name>RL36_STRA3</name>
<organism>
    <name type="scientific">Streptococcus agalactiae serotype III (strain NEM316)</name>
    <dbReference type="NCBI Taxonomy" id="211110"/>
    <lineage>
        <taxon>Bacteria</taxon>
        <taxon>Bacillati</taxon>
        <taxon>Bacillota</taxon>
        <taxon>Bacilli</taxon>
        <taxon>Lactobacillales</taxon>
        <taxon>Streptococcaceae</taxon>
        <taxon>Streptococcus</taxon>
    </lineage>
</organism>
<comment type="similarity">
    <text evidence="1">Belongs to the bacterial ribosomal protein bL36 family.</text>
</comment>
<proteinExistence type="inferred from homology"/>
<keyword id="KW-0687">Ribonucleoprotein</keyword>
<keyword id="KW-0689">Ribosomal protein</keyword>
<evidence type="ECO:0000255" key="1">
    <source>
        <dbReference type="HAMAP-Rule" id="MF_00251"/>
    </source>
</evidence>
<evidence type="ECO:0000305" key="2"/>
<gene>
    <name evidence="1" type="primary">rpmJ</name>
    <name type="ordered locus">gbs0081</name>
</gene>
<feature type="chain" id="PRO_0000126274" description="Large ribosomal subunit protein bL36">
    <location>
        <begin position="1"/>
        <end position="38"/>
    </location>
</feature>
<dbReference type="EMBL" id="AL766843">
    <property type="protein sequence ID" value="CAD45726.1"/>
    <property type="molecule type" value="Genomic_DNA"/>
</dbReference>
<dbReference type="RefSeq" id="WP_000868345.1">
    <property type="nucleotide sequence ID" value="NC_004368.1"/>
</dbReference>
<dbReference type="SMR" id="P66306"/>
<dbReference type="GeneID" id="93860206"/>
<dbReference type="KEGG" id="san:gbs0081"/>
<dbReference type="eggNOG" id="COG0257">
    <property type="taxonomic scope" value="Bacteria"/>
</dbReference>
<dbReference type="HOGENOM" id="CLU_135723_6_2_9"/>
<dbReference type="Proteomes" id="UP000000823">
    <property type="component" value="Chromosome"/>
</dbReference>
<dbReference type="GO" id="GO:0005737">
    <property type="term" value="C:cytoplasm"/>
    <property type="evidence" value="ECO:0007669"/>
    <property type="project" value="UniProtKB-ARBA"/>
</dbReference>
<dbReference type="GO" id="GO:1990904">
    <property type="term" value="C:ribonucleoprotein complex"/>
    <property type="evidence" value="ECO:0007669"/>
    <property type="project" value="UniProtKB-KW"/>
</dbReference>
<dbReference type="GO" id="GO:0005840">
    <property type="term" value="C:ribosome"/>
    <property type="evidence" value="ECO:0007669"/>
    <property type="project" value="UniProtKB-KW"/>
</dbReference>
<dbReference type="GO" id="GO:0003735">
    <property type="term" value="F:structural constituent of ribosome"/>
    <property type="evidence" value="ECO:0007669"/>
    <property type="project" value="InterPro"/>
</dbReference>
<dbReference type="GO" id="GO:0006412">
    <property type="term" value="P:translation"/>
    <property type="evidence" value="ECO:0007669"/>
    <property type="project" value="UniProtKB-UniRule"/>
</dbReference>
<dbReference type="HAMAP" id="MF_00251">
    <property type="entry name" value="Ribosomal_bL36"/>
    <property type="match status" value="1"/>
</dbReference>
<dbReference type="InterPro" id="IPR000473">
    <property type="entry name" value="Ribosomal_bL36"/>
</dbReference>
<dbReference type="InterPro" id="IPR035977">
    <property type="entry name" value="Ribosomal_bL36_sp"/>
</dbReference>
<dbReference type="NCBIfam" id="TIGR01022">
    <property type="entry name" value="rpmJ_bact"/>
    <property type="match status" value="1"/>
</dbReference>
<dbReference type="PANTHER" id="PTHR42888">
    <property type="entry name" value="50S RIBOSOMAL PROTEIN L36, CHLOROPLASTIC"/>
    <property type="match status" value="1"/>
</dbReference>
<dbReference type="PANTHER" id="PTHR42888:SF1">
    <property type="entry name" value="LARGE RIBOSOMAL SUBUNIT PROTEIN BL36C"/>
    <property type="match status" value="1"/>
</dbReference>
<dbReference type="Pfam" id="PF00444">
    <property type="entry name" value="Ribosomal_L36"/>
    <property type="match status" value="1"/>
</dbReference>
<dbReference type="SUPFAM" id="SSF57840">
    <property type="entry name" value="Ribosomal protein L36"/>
    <property type="match status" value="1"/>
</dbReference>
<dbReference type="PROSITE" id="PS00828">
    <property type="entry name" value="RIBOSOMAL_L36"/>
    <property type="match status" value="1"/>
</dbReference>
<sequence length="38" mass="4451">MKVRPSVKPICEYCKVIRRNGRVMVICPTNPKHKQRQG</sequence>
<accession>P66306</accession>
<accession>Q9A1V2</accession>